<evidence type="ECO:0000255" key="1">
    <source>
        <dbReference type="HAMAP-Rule" id="MF_01395"/>
    </source>
</evidence>
<evidence type="ECO:0000255" key="2">
    <source>
        <dbReference type="PROSITE-ProRule" id="PRU01136"/>
    </source>
</evidence>
<name>ACCD_STRPB</name>
<organism>
    <name type="scientific">Streptococcus pyogenes serotype M12 (strain MGAS2096)</name>
    <dbReference type="NCBI Taxonomy" id="370553"/>
    <lineage>
        <taxon>Bacteria</taxon>
        <taxon>Bacillati</taxon>
        <taxon>Bacillota</taxon>
        <taxon>Bacilli</taxon>
        <taxon>Lactobacillales</taxon>
        <taxon>Streptococcaceae</taxon>
        <taxon>Streptococcus</taxon>
    </lineage>
</organism>
<proteinExistence type="inferred from homology"/>
<reference key="1">
    <citation type="journal article" date="2006" name="Proc. Natl. Acad. Sci. U.S.A.">
        <title>Molecular genetic anatomy of inter- and intraserotype variation in the human bacterial pathogen group A Streptococcus.</title>
        <authorList>
            <person name="Beres S.B."/>
            <person name="Richter E.W."/>
            <person name="Nagiec M.J."/>
            <person name="Sumby P."/>
            <person name="Porcella S.F."/>
            <person name="DeLeo F.R."/>
            <person name="Musser J.M."/>
        </authorList>
    </citation>
    <scope>NUCLEOTIDE SEQUENCE [LARGE SCALE GENOMIC DNA]</scope>
    <source>
        <strain>MGAS2096</strain>
    </source>
</reference>
<protein>
    <recommendedName>
        <fullName evidence="1">Acetyl-coenzyme A carboxylase carboxyl transferase subunit beta</fullName>
        <shortName evidence="1">ACCase subunit beta</shortName>
        <shortName evidence="1">Acetyl-CoA carboxylase carboxyltransferase subunit beta</shortName>
        <ecNumber evidence="1">2.1.3.15</ecNumber>
    </recommendedName>
</protein>
<keyword id="KW-0067">ATP-binding</keyword>
<keyword id="KW-0963">Cytoplasm</keyword>
<keyword id="KW-0275">Fatty acid biosynthesis</keyword>
<keyword id="KW-0276">Fatty acid metabolism</keyword>
<keyword id="KW-0444">Lipid biosynthesis</keyword>
<keyword id="KW-0443">Lipid metabolism</keyword>
<keyword id="KW-0479">Metal-binding</keyword>
<keyword id="KW-0547">Nucleotide-binding</keyword>
<keyword id="KW-0808">Transferase</keyword>
<keyword id="KW-0862">Zinc</keyword>
<keyword id="KW-0863">Zinc-finger</keyword>
<accession>Q1JA97</accession>
<sequence length="288" mass="31826">MALFRKKDKYIRITPNNSLKGSVSHNVPEVPDELFAKCPACKHMIYKKDLGLAKICPTCSYNFRISAQERLTLTVDEGSFQELFTSIETKDPLRFPGYQEKLQKAKETTGLHEAVLTGKAMVKEQKIALAIMDSHFIMASMGTVVGEKITRLFELAIEENLPVVIFTASGGARMQEGIMSLMQMAKVSAAVKRHSNAGLFYLTILTDPTTGGVTASFAMEGDIILAEPQSLVGFAGRRVIETTVRENLPDDFQKAEFLQDHGFVDAIVKRTELRDKIAHLVAFHGGGQ</sequence>
<comment type="function">
    <text evidence="1">Component of the acetyl coenzyme A carboxylase (ACC) complex. Biotin carboxylase (BC) catalyzes the carboxylation of biotin on its carrier protein (BCCP) and then the CO(2) group is transferred by the transcarboxylase to acetyl-CoA to form malonyl-CoA.</text>
</comment>
<comment type="catalytic activity">
    <reaction evidence="1">
        <text>N(6)-carboxybiotinyl-L-lysyl-[protein] + acetyl-CoA = N(6)-biotinyl-L-lysyl-[protein] + malonyl-CoA</text>
        <dbReference type="Rhea" id="RHEA:54728"/>
        <dbReference type="Rhea" id="RHEA-COMP:10505"/>
        <dbReference type="Rhea" id="RHEA-COMP:10506"/>
        <dbReference type="ChEBI" id="CHEBI:57288"/>
        <dbReference type="ChEBI" id="CHEBI:57384"/>
        <dbReference type="ChEBI" id="CHEBI:83144"/>
        <dbReference type="ChEBI" id="CHEBI:83145"/>
        <dbReference type="EC" id="2.1.3.15"/>
    </reaction>
</comment>
<comment type="cofactor">
    <cofactor evidence="1">
        <name>Zn(2+)</name>
        <dbReference type="ChEBI" id="CHEBI:29105"/>
    </cofactor>
    <text evidence="1">Binds 1 zinc ion per subunit.</text>
</comment>
<comment type="pathway">
    <text evidence="1">Lipid metabolism; malonyl-CoA biosynthesis; malonyl-CoA from acetyl-CoA: step 1/1.</text>
</comment>
<comment type="subunit">
    <text evidence="1">Acetyl-CoA carboxylase is a heterohexamer composed of biotin carboxyl carrier protein (AccB), biotin carboxylase (AccC) and two subunits each of ACCase subunit alpha (AccA) and ACCase subunit beta (AccD).</text>
</comment>
<comment type="subcellular location">
    <subcellularLocation>
        <location evidence="1">Cytoplasm</location>
    </subcellularLocation>
</comment>
<comment type="similarity">
    <text evidence="1">Belongs to the AccD/PCCB family.</text>
</comment>
<dbReference type="EC" id="2.1.3.15" evidence="1"/>
<dbReference type="EMBL" id="CP000261">
    <property type="protein sequence ID" value="ABF36564.1"/>
    <property type="molecule type" value="Genomic_DNA"/>
</dbReference>
<dbReference type="SMR" id="Q1JA97"/>
<dbReference type="KEGG" id="spj:MGAS2096_Spy1512"/>
<dbReference type="HOGENOM" id="CLU_015486_1_1_9"/>
<dbReference type="UniPathway" id="UPA00655">
    <property type="reaction ID" value="UER00711"/>
</dbReference>
<dbReference type="GO" id="GO:0009317">
    <property type="term" value="C:acetyl-CoA carboxylase complex"/>
    <property type="evidence" value="ECO:0007669"/>
    <property type="project" value="InterPro"/>
</dbReference>
<dbReference type="GO" id="GO:0003989">
    <property type="term" value="F:acetyl-CoA carboxylase activity"/>
    <property type="evidence" value="ECO:0007669"/>
    <property type="project" value="InterPro"/>
</dbReference>
<dbReference type="GO" id="GO:0005524">
    <property type="term" value="F:ATP binding"/>
    <property type="evidence" value="ECO:0007669"/>
    <property type="project" value="UniProtKB-KW"/>
</dbReference>
<dbReference type="GO" id="GO:0016743">
    <property type="term" value="F:carboxyl- or carbamoyltransferase activity"/>
    <property type="evidence" value="ECO:0007669"/>
    <property type="project" value="UniProtKB-UniRule"/>
</dbReference>
<dbReference type="GO" id="GO:0008270">
    <property type="term" value="F:zinc ion binding"/>
    <property type="evidence" value="ECO:0007669"/>
    <property type="project" value="UniProtKB-UniRule"/>
</dbReference>
<dbReference type="GO" id="GO:0006633">
    <property type="term" value="P:fatty acid biosynthetic process"/>
    <property type="evidence" value="ECO:0007669"/>
    <property type="project" value="UniProtKB-KW"/>
</dbReference>
<dbReference type="GO" id="GO:2001295">
    <property type="term" value="P:malonyl-CoA biosynthetic process"/>
    <property type="evidence" value="ECO:0007669"/>
    <property type="project" value="UniProtKB-UniRule"/>
</dbReference>
<dbReference type="Gene3D" id="3.90.226.10">
    <property type="entry name" value="2-enoyl-CoA Hydratase, Chain A, domain 1"/>
    <property type="match status" value="1"/>
</dbReference>
<dbReference type="HAMAP" id="MF_01395">
    <property type="entry name" value="AcetylCoA_CT_beta"/>
    <property type="match status" value="1"/>
</dbReference>
<dbReference type="InterPro" id="IPR034733">
    <property type="entry name" value="AcCoA_carboxyl_beta"/>
</dbReference>
<dbReference type="InterPro" id="IPR000438">
    <property type="entry name" value="Acetyl_CoA_COase_Trfase_b_su"/>
</dbReference>
<dbReference type="InterPro" id="IPR029045">
    <property type="entry name" value="ClpP/crotonase-like_dom_sf"/>
</dbReference>
<dbReference type="InterPro" id="IPR011762">
    <property type="entry name" value="COA_CT_N"/>
</dbReference>
<dbReference type="NCBIfam" id="TIGR00515">
    <property type="entry name" value="accD"/>
    <property type="match status" value="1"/>
</dbReference>
<dbReference type="PANTHER" id="PTHR42995">
    <property type="entry name" value="ACETYL-COENZYME A CARBOXYLASE CARBOXYL TRANSFERASE SUBUNIT BETA, CHLOROPLASTIC"/>
    <property type="match status" value="1"/>
</dbReference>
<dbReference type="PANTHER" id="PTHR42995:SF5">
    <property type="entry name" value="ACETYL-COENZYME A CARBOXYLASE CARBOXYL TRANSFERASE SUBUNIT BETA, CHLOROPLASTIC"/>
    <property type="match status" value="1"/>
</dbReference>
<dbReference type="Pfam" id="PF01039">
    <property type="entry name" value="Carboxyl_trans"/>
    <property type="match status" value="1"/>
</dbReference>
<dbReference type="PRINTS" id="PR01070">
    <property type="entry name" value="ACCCTRFRASEB"/>
</dbReference>
<dbReference type="SUPFAM" id="SSF52096">
    <property type="entry name" value="ClpP/crotonase"/>
    <property type="match status" value="1"/>
</dbReference>
<dbReference type="PROSITE" id="PS50980">
    <property type="entry name" value="COA_CT_NTER"/>
    <property type="match status" value="1"/>
</dbReference>
<gene>
    <name evidence="1" type="primary">accD</name>
    <name type="ordered locus">MGAS2096_Spy1512</name>
</gene>
<feature type="chain" id="PRO_0000389874" description="Acetyl-coenzyme A carboxylase carboxyl transferase subunit beta">
    <location>
        <begin position="1"/>
        <end position="288"/>
    </location>
</feature>
<feature type="domain" description="CoA carboxyltransferase N-terminal" evidence="2">
    <location>
        <begin position="34"/>
        <end position="288"/>
    </location>
</feature>
<feature type="zinc finger region" description="C4-type" evidence="1">
    <location>
        <begin position="38"/>
        <end position="59"/>
    </location>
</feature>
<feature type="binding site" evidence="1">
    <location>
        <position position="38"/>
    </location>
    <ligand>
        <name>Zn(2+)</name>
        <dbReference type="ChEBI" id="CHEBI:29105"/>
    </ligand>
</feature>
<feature type="binding site" evidence="1">
    <location>
        <position position="41"/>
    </location>
    <ligand>
        <name>Zn(2+)</name>
        <dbReference type="ChEBI" id="CHEBI:29105"/>
    </ligand>
</feature>
<feature type="binding site" evidence="1">
    <location>
        <position position="56"/>
    </location>
    <ligand>
        <name>Zn(2+)</name>
        <dbReference type="ChEBI" id="CHEBI:29105"/>
    </ligand>
</feature>
<feature type="binding site" evidence="1">
    <location>
        <position position="59"/>
    </location>
    <ligand>
        <name>Zn(2+)</name>
        <dbReference type="ChEBI" id="CHEBI:29105"/>
    </ligand>
</feature>